<evidence type="ECO:0000255" key="1">
    <source>
        <dbReference type="HAMAP-Rule" id="MF_00052"/>
    </source>
</evidence>
<evidence type="ECO:0000255" key="2">
    <source>
        <dbReference type="PROSITE-ProRule" id="PRU01319"/>
    </source>
</evidence>
<feature type="chain" id="PRO_0000334869" description="Ribonuclease HII">
    <location>
        <begin position="1"/>
        <end position="184"/>
    </location>
</feature>
<feature type="domain" description="RNase H type-2" evidence="2">
    <location>
        <begin position="2"/>
        <end position="184"/>
    </location>
</feature>
<feature type="binding site" evidence="1">
    <location>
        <position position="8"/>
    </location>
    <ligand>
        <name>a divalent metal cation</name>
        <dbReference type="ChEBI" id="CHEBI:60240"/>
    </ligand>
</feature>
<feature type="binding site" evidence="1">
    <location>
        <position position="9"/>
    </location>
    <ligand>
        <name>a divalent metal cation</name>
        <dbReference type="ChEBI" id="CHEBI:60240"/>
    </ligand>
</feature>
<feature type="binding site" evidence="1">
    <location>
        <position position="95"/>
    </location>
    <ligand>
        <name>a divalent metal cation</name>
        <dbReference type="ChEBI" id="CHEBI:60240"/>
    </ligand>
</feature>
<name>RNH2_CAMC1</name>
<dbReference type="EC" id="3.1.26.4" evidence="1"/>
<dbReference type="EMBL" id="CP000792">
    <property type="protein sequence ID" value="EAT97651.1"/>
    <property type="molecule type" value="Genomic_DNA"/>
</dbReference>
<dbReference type="RefSeq" id="WP_012140565.1">
    <property type="nucleotide sequence ID" value="NC_009802.2"/>
</dbReference>
<dbReference type="SMR" id="A7ZG16"/>
<dbReference type="STRING" id="360104.CCC13826_0342"/>
<dbReference type="KEGG" id="cco:CCC13826_0342"/>
<dbReference type="eggNOG" id="COG0164">
    <property type="taxonomic scope" value="Bacteria"/>
</dbReference>
<dbReference type="HOGENOM" id="CLU_036532_3_1_7"/>
<dbReference type="OrthoDB" id="9803420at2"/>
<dbReference type="Proteomes" id="UP000001121">
    <property type="component" value="Chromosome"/>
</dbReference>
<dbReference type="GO" id="GO:0005737">
    <property type="term" value="C:cytoplasm"/>
    <property type="evidence" value="ECO:0007669"/>
    <property type="project" value="UniProtKB-SubCell"/>
</dbReference>
<dbReference type="GO" id="GO:0032299">
    <property type="term" value="C:ribonuclease H2 complex"/>
    <property type="evidence" value="ECO:0007669"/>
    <property type="project" value="TreeGrafter"/>
</dbReference>
<dbReference type="GO" id="GO:0030145">
    <property type="term" value="F:manganese ion binding"/>
    <property type="evidence" value="ECO:0007669"/>
    <property type="project" value="UniProtKB-UniRule"/>
</dbReference>
<dbReference type="GO" id="GO:0003723">
    <property type="term" value="F:RNA binding"/>
    <property type="evidence" value="ECO:0007669"/>
    <property type="project" value="InterPro"/>
</dbReference>
<dbReference type="GO" id="GO:0004523">
    <property type="term" value="F:RNA-DNA hybrid ribonuclease activity"/>
    <property type="evidence" value="ECO:0007669"/>
    <property type="project" value="UniProtKB-UniRule"/>
</dbReference>
<dbReference type="GO" id="GO:0043137">
    <property type="term" value="P:DNA replication, removal of RNA primer"/>
    <property type="evidence" value="ECO:0007669"/>
    <property type="project" value="TreeGrafter"/>
</dbReference>
<dbReference type="GO" id="GO:0006298">
    <property type="term" value="P:mismatch repair"/>
    <property type="evidence" value="ECO:0007669"/>
    <property type="project" value="TreeGrafter"/>
</dbReference>
<dbReference type="CDD" id="cd07182">
    <property type="entry name" value="RNase_HII_bacteria_HII_like"/>
    <property type="match status" value="1"/>
</dbReference>
<dbReference type="Gene3D" id="3.30.420.10">
    <property type="entry name" value="Ribonuclease H-like superfamily/Ribonuclease H"/>
    <property type="match status" value="1"/>
</dbReference>
<dbReference type="HAMAP" id="MF_00052_B">
    <property type="entry name" value="RNase_HII_B"/>
    <property type="match status" value="1"/>
</dbReference>
<dbReference type="InterPro" id="IPR022898">
    <property type="entry name" value="RNase_HII"/>
</dbReference>
<dbReference type="InterPro" id="IPR001352">
    <property type="entry name" value="RNase_HII/HIII"/>
</dbReference>
<dbReference type="InterPro" id="IPR024567">
    <property type="entry name" value="RNase_HII/HIII_dom"/>
</dbReference>
<dbReference type="InterPro" id="IPR012337">
    <property type="entry name" value="RNaseH-like_sf"/>
</dbReference>
<dbReference type="InterPro" id="IPR036397">
    <property type="entry name" value="RNaseH_sf"/>
</dbReference>
<dbReference type="NCBIfam" id="NF000595">
    <property type="entry name" value="PRK00015.1-3"/>
    <property type="match status" value="1"/>
</dbReference>
<dbReference type="PANTHER" id="PTHR10954:SF23">
    <property type="entry name" value="RIBONUCLEASE"/>
    <property type="match status" value="1"/>
</dbReference>
<dbReference type="PANTHER" id="PTHR10954">
    <property type="entry name" value="RIBONUCLEASE H2 SUBUNIT A"/>
    <property type="match status" value="1"/>
</dbReference>
<dbReference type="Pfam" id="PF01351">
    <property type="entry name" value="RNase_HII"/>
    <property type="match status" value="1"/>
</dbReference>
<dbReference type="SUPFAM" id="SSF53098">
    <property type="entry name" value="Ribonuclease H-like"/>
    <property type="match status" value="1"/>
</dbReference>
<dbReference type="PROSITE" id="PS51975">
    <property type="entry name" value="RNASE_H_2"/>
    <property type="match status" value="1"/>
</dbReference>
<proteinExistence type="inferred from homology"/>
<comment type="function">
    <text evidence="1">Endonuclease that specifically degrades the RNA of RNA-DNA hybrids.</text>
</comment>
<comment type="catalytic activity">
    <reaction evidence="1">
        <text>Endonucleolytic cleavage to 5'-phosphomonoester.</text>
        <dbReference type="EC" id="3.1.26.4"/>
    </reaction>
</comment>
<comment type="cofactor">
    <cofactor evidence="1">
        <name>Mn(2+)</name>
        <dbReference type="ChEBI" id="CHEBI:29035"/>
    </cofactor>
    <cofactor evidence="1">
        <name>Mg(2+)</name>
        <dbReference type="ChEBI" id="CHEBI:18420"/>
    </cofactor>
    <text evidence="1">Manganese or magnesium. Binds 1 divalent metal ion per monomer in the absence of substrate. May bind a second metal ion after substrate binding.</text>
</comment>
<comment type="subcellular location">
    <subcellularLocation>
        <location evidence="1">Cytoplasm</location>
    </subcellularLocation>
</comment>
<comment type="similarity">
    <text evidence="1">Belongs to the RNase HII family.</text>
</comment>
<accession>A7ZG16</accession>
<gene>
    <name evidence="1" type="primary">rnhB</name>
    <name type="ordered locus">Ccon26_18890</name>
    <name type="ORF">CCC13826_0342</name>
</gene>
<protein>
    <recommendedName>
        <fullName evidence="1">Ribonuclease HII</fullName>
        <shortName evidence="1">RNase HII</shortName>
        <ecNumber evidence="1">3.1.26.4</ecNumber>
    </recommendedName>
</protein>
<keyword id="KW-0963">Cytoplasm</keyword>
<keyword id="KW-0255">Endonuclease</keyword>
<keyword id="KW-0378">Hydrolase</keyword>
<keyword id="KW-0464">Manganese</keyword>
<keyword id="KW-0479">Metal-binding</keyword>
<keyword id="KW-0540">Nuclease</keyword>
<organism>
    <name type="scientific">Campylobacter concisus (strain 13826)</name>
    <dbReference type="NCBI Taxonomy" id="360104"/>
    <lineage>
        <taxon>Bacteria</taxon>
        <taxon>Pseudomonadati</taxon>
        <taxon>Campylobacterota</taxon>
        <taxon>Epsilonproteobacteria</taxon>
        <taxon>Campylobacterales</taxon>
        <taxon>Campylobacteraceae</taxon>
        <taxon>Campylobacter</taxon>
    </lineage>
</organism>
<reference key="1">
    <citation type="submission" date="2007-10" db="EMBL/GenBank/DDBJ databases">
        <title>Genome sequence of Campylobacter concisus 13826 isolated from human feces.</title>
        <authorList>
            <person name="Fouts D.E."/>
            <person name="Mongodin E.F."/>
            <person name="Puiu D."/>
            <person name="Sebastian Y."/>
            <person name="Miller W.G."/>
            <person name="Mandrell R.E."/>
            <person name="On S."/>
            <person name="Nelson K.E."/>
        </authorList>
    </citation>
    <scope>NUCLEOTIDE SEQUENCE [LARGE SCALE GENOMIC DNA]</scope>
    <source>
        <strain>13826</strain>
    </source>
</reference>
<sequence>MAKICGIDEAGRGALAGPLSVAACVLNSEISGLNDSKKLTAKRREELFKKITKSSNFLIAYFSNAQIDELGLSECLRRALKLFKAHFESFEIIYDGNLDYGVGITTMIKADGKVAGVSAASILAKVSRDRLMNGWDKFYPAYGFAGHKGYGTKSHLDAIAKFGYSDFHRKSFVIKPKLAQSSLF</sequence>